<evidence type="ECO:0000255" key="1">
    <source>
        <dbReference type="HAMAP-Rule" id="MF_00052"/>
    </source>
</evidence>
<evidence type="ECO:0000255" key="2">
    <source>
        <dbReference type="PROSITE-ProRule" id="PRU01319"/>
    </source>
</evidence>
<keyword id="KW-0963">Cytoplasm</keyword>
<keyword id="KW-0255">Endonuclease</keyword>
<keyword id="KW-0378">Hydrolase</keyword>
<keyword id="KW-0464">Manganese</keyword>
<keyword id="KW-0479">Metal-binding</keyword>
<keyword id="KW-0540">Nuclease</keyword>
<keyword id="KW-1185">Reference proteome</keyword>
<accession>A8MHC7</accession>
<reference key="1">
    <citation type="submission" date="2007-10" db="EMBL/GenBank/DDBJ databases">
        <title>Complete genome of Alkaliphilus oremlandii OhILAs.</title>
        <authorList>
            <person name="Copeland A."/>
            <person name="Lucas S."/>
            <person name="Lapidus A."/>
            <person name="Barry K."/>
            <person name="Detter J.C."/>
            <person name="Glavina del Rio T."/>
            <person name="Hammon N."/>
            <person name="Israni S."/>
            <person name="Dalin E."/>
            <person name="Tice H."/>
            <person name="Pitluck S."/>
            <person name="Chain P."/>
            <person name="Malfatti S."/>
            <person name="Shin M."/>
            <person name="Vergez L."/>
            <person name="Schmutz J."/>
            <person name="Larimer F."/>
            <person name="Land M."/>
            <person name="Hauser L."/>
            <person name="Kyrpides N."/>
            <person name="Mikhailova N."/>
            <person name="Stolz J.F."/>
            <person name="Dawson A."/>
            <person name="Fisher E."/>
            <person name="Crable B."/>
            <person name="Perera E."/>
            <person name="Lisak J."/>
            <person name="Ranganathan M."/>
            <person name="Basu P."/>
            <person name="Richardson P."/>
        </authorList>
    </citation>
    <scope>NUCLEOTIDE SEQUENCE [LARGE SCALE GENOMIC DNA]</scope>
    <source>
        <strain>OhILAs</strain>
    </source>
</reference>
<gene>
    <name evidence="1" type="primary">rnhB</name>
    <name type="ordered locus">Clos_1470</name>
</gene>
<organism>
    <name type="scientific">Alkaliphilus oremlandii (strain OhILAs)</name>
    <name type="common">Clostridium oremlandii (strain OhILAs)</name>
    <dbReference type="NCBI Taxonomy" id="350688"/>
    <lineage>
        <taxon>Bacteria</taxon>
        <taxon>Bacillati</taxon>
        <taxon>Bacillota</taxon>
        <taxon>Clostridia</taxon>
        <taxon>Peptostreptococcales</taxon>
        <taxon>Natronincolaceae</taxon>
        <taxon>Alkaliphilus</taxon>
    </lineage>
</organism>
<dbReference type="EC" id="3.1.26.4" evidence="1"/>
<dbReference type="EMBL" id="CP000853">
    <property type="protein sequence ID" value="ABW19014.1"/>
    <property type="molecule type" value="Genomic_DNA"/>
</dbReference>
<dbReference type="RefSeq" id="WP_012159326.1">
    <property type="nucleotide sequence ID" value="NC_009922.1"/>
</dbReference>
<dbReference type="SMR" id="A8MHC7"/>
<dbReference type="STRING" id="350688.Clos_1470"/>
<dbReference type="KEGG" id="aoe:Clos_1470"/>
<dbReference type="eggNOG" id="COG0164">
    <property type="taxonomic scope" value="Bacteria"/>
</dbReference>
<dbReference type="HOGENOM" id="CLU_036532_3_2_9"/>
<dbReference type="OrthoDB" id="9803420at2"/>
<dbReference type="Proteomes" id="UP000000269">
    <property type="component" value="Chromosome"/>
</dbReference>
<dbReference type="GO" id="GO:0005737">
    <property type="term" value="C:cytoplasm"/>
    <property type="evidence" value="ECO:0007669"/>
    <property type="project" value="UniProtKB-SubCell"/>
</dbReference>
<dbReference type="GO" id="GO:0032299">
    <property type="term" value="C:ribonuclease H2 complex"/>
    <property type="evidence" value="ECO:0007669"/>
    <property type="project" value="TreeGrafter"/>
</dbReference>
<dbReference type="GO" id="GO:0030145">
    <property type="term" value="F:manganese ion binding"/>
    <property type="evidence" value="ECO:0007669"/>
    <property type="project" value="UniProtKB-UniRule"/>
</dbReference>
<dbReference type="GO" id="GO:0003723">
    <property type="term" value="F:RNA binding"/>
    <property type="evidence" value="ECO:0007669"/>
    <property type="project" value="InterPro"/>
</dbReference>
<dbReference type="GO" id="GO:0004523">
    <property type="term" value="F:RNA-DNA hybrid ribonuclease activity"/>
    <property type="evidence" value="ECO:0007669"/>
    <property type="project" value="UniProtKB-UniRule"/>
</dbReference>
<dbReference type="GO" id="GO:0043137">
    <property type="term" value="P:DNA replication, removal of RNA primer"/>
    <property type="evidence" value="ECO:0007669"/>
    <property type="project" value="TreeGrafter"/>
</dbReference>
<dbReference type="GO" id="GO:0006298">
    <property type="term" value="P:mismatch repair"/>
    <property type="evidence" value="ECO:0007669"/>
    <property type="project" value="TreeGrafter"/>
</dbReference>
<dbReference type="CDD" id="cd07182">
    <property type="entry name" value="RNase_HII_bacteria_HII_like"/>
    <property type="match status" value="1"/>
</dbReference>
<dbReference type="Gene3D" id="3.30.420.10">
    <property type="entry name" value="Ribonuclease H-like superfamily/Ribonuclease H"/>
    <property type="match status" value="1"/>
</dbReference>
<dbReference type="HAMAP" id="MF_00052_B">
    <property type="entry name" value="RNase_HII_B"/>
    <property type="match status" value="1"/>
</dbReference>
<dbReference type="InterPro" id="IPR022898">
    <property type="entry name" value="RNase_HII"/>
</dbReference>
<dbReference type="InterPro" id="IPR001352">
    <property type="entry name" value="RNase_HII/HIII"/>
</dbReference>
<dbReference type="InterPro" id="IPR024567">
    <property type="entry name" value="RNase_HII/HIII_dom"/>
</dbReference>
<dbReference type="InterPro" id="IPR012337">
    <property type="entry name" value="RNaseH-like_sf"/>
</dbReference>
<dbReference type="InterPro" id="IPR036397">
    <property type="entry name" value="RNaseH_sf"/>
</dbReference>
<dbReference type="NCBIfam" id="NF000595">
    <property type="entry name" value="PRK00015.1-3"/>
    <property type="match status" value="1"/>
</dbReference>
<dbReference type="PANTHER" id="PTHR10954">
    <property type="entry name" value="RIBONUCLEASE H2 SUBUNIT A"/>
    <property type="match status" value="1"/>
</dbReference>
<dbReference type="PANTHER" id="PTHR10954:SF18">
    <property type="entry name" value="RIBONUCLEASE HII"/>
    <property type="match status" value="1"/>
</dbReference>
<dbReference type="Pfam" id="PF01351">
    <property type="entry name" value="RNase_HII"/>
    <property type="match status" value="1"/>
</dbReference>
<dbReference type="SUPFAM" id="SSF53098">
    <property type="entry name" value="Ribonuclease H-like"/>
    <property type="match status" value="1"/>
</dbReference>
<dbReference type="PROSITE" id="PS51975">
    <property type="entry name" value="RNASE_H_2"/>
    <property type="match status" value="1"/>
</dbReference>
<feature type="chain" id="PRO_0000334859" description="Ribonuclease HII">
    <location>
        <begin position="1"/>
        <end position="203"/>
    </location>
</feature>
<feature type="domain" description="RNase H type-2" evidence="2">
    <location>
        <begin position="16"/>
        <end position="203"/>
    </location>
</feature>
<feature type="binding site" evidence="1">
    <location>
        <position position="22"/>
    </location>
    <ligand>
        <name>a divalent metal cation</name>
        <dbReference type="ChEBI" id="CHEBI:60240"/>
    </ligand>
</feature>
<feature type="binding site" evidence="1">
    <location>
        <position position="23"/>
    </location>
    <ligand>
        <name>a divalent metal cation</name>
        <dbReference type="ChEBI" id="CHEBI:60240"/>
    </ligand>
</feature>
<feature type="binding site" evidence="1">
    <location>
        <position position="120"/>
    </location>
    <ligand>
        <name>a divalent metal cation</name>
        <dbReference type="ChEBI" id="CHEBI:60240"/>
    </ligand>
</feature>
<comment type="function">
    <text evidence="1">Endonuclease that specifically degrades the RNA of RNA-DNA hybrids.</text>
</comment>
<comment type="catalytic activity">
    <reaction evidence="1">
        <text>Endonucleolytic cleavage to 5'-phosphomonoester.</text>
        <dbReference type="EC" id="3.1.26.4"/>
    </reaction>
</comment>
<comment type="cofactor">
    <cofactor evidence="1">
        <name>Mn(2+)</name>
        <dbReference type="ChEBI" id="CHEBI:29035"/>
    </cofactor>
    <cofactor evidence="1">
        <name>Mg(2+)</name>
        <dbReference type="ChEBI" id="CHEBI:18420"/>
    </cofactor>
    <text evidence="1">Manganese or magnesium. Binds 1 divalent metal ion per monomer in the absence of substrate. May bind a second metal ion after substrate binding.</text>
</comment>
<comment type="subcellular location">
    <subcellularLocation>
        <location evidence="1">Cytoplasm</location>
    </subcellularLocation>
</comment>
<comment type="similarity">
    <text evidence="1">Belongs to the RNase HII family.</text>
</comment>
<name>RNH2_ALKOO</name>
<proteinExistence type="inferred from homology"/>
<sequence>MPTIDIESAIWNSGYENIACCDEVGRGCLFGSVLAAAVIMPKDVIIDGVKDSKKLSHKKREQLYEIIKEKSLAIGVGTVSSEIIDKINIKNATRLAMKKAILSLKDKDGNIVAPDYILIDAEEIDVPTPQSAVIKGDDLCHGIAAASIVAKVLRDRLCQRWEEEHPNYGIGQNKGYGTKAHREALKEHGPSPMHRKSFLNKIL</sequence>
<protein>
    <recommendedName>
        <fullName evidence="1">Ribonuclease HII</fullName>
        <shortName evidence="1">RNase HII</shortName>
        <ecNumber evidence="1">3.1.26.4</ecNumber>
    </recommendedName>
</protein>